<accession>Q30Z55</accession>
<gene>
    <name evidence="1" type="primary">rpsZ</name>
    <name evidence="1" type="synonym">rpsN</name>
    <name type="ordered locus">Dde_2244</name>
</gene>
<organism>
    <name type="scientific">Oleidesulfovibrio alaskensis (strain ATCC BAA-1058 / DSM 17464 / G20)</name>
    <name type="common">Desulfovibrio alaskensis</name>
    <dbReference type="NCBI Taxonomy" id="207559"/>
    <lineage>
        <taxon>Bacteria</taxon>
        <taxon>Pseudomonadati</taxon>
        <taxon>Thermodesulfobacteriota</taxon>
        <taxon>Desulfovibrionia</taxon>
        <taxon>Desulfovibrionales</taxon>
        <taxon>Desulfovibrionaceae</taxon>
        <taxon>Oleidesulfovibrio</taxon>
    </lineage>
</organism>
<name>RS14Z_OLEA2</name>
<comment type="function">
    <text evidence="1">Binds 16S rRNA, required for the assembly of 30S particles and may also be responsible for determining the conformation of the 16S rRNA at the A site.</text>
</comment>
<comment type="cofactor">
    <cofactor evidence="1">
        <name>Zn(2+)</name>
        <dbReference type="ChEBI" id="CHEBI:29105"/>
    </cofactor>
    <text evidence="1">Binds 1 zinc ion per subunit.</text>
</comment>
<comment type="subunit">
    <text evidence="1">Part of the 30S ribosomal subunit. Contacts proteins S3 and S10.</text>
</comment>
<comment type="similarity">
    <text evidence="1">Belongs to the universal ribosomal protein uS14 family. Zinc-binding uS14 subfamily.</text>
</comment>
<protein>
    <recommendedName>
        <fullName evidence="1">Small ribosomal subunit protein uS14</fullName>
    </recommendedName>
    <alternativeName>
        <fullName evidence="2">30S ribosomal protein S14 type Z</fullName>
    </alternativeName>
</protein>
<dbReference type="EMBL" id="CP000112">
    <property type="protein sequence ID" value="ABB39041.1"/>
    <property type="molecule type" value="Genomic_DNA"/>
</dbReference>
<dbReference type="RefSeq" id="WP_011368132.1">
    <property type="nucleotide sequence ID" value="NC_007519.1"/>
</dbReference>
<dbReference type="SMR" id="Q30Z55"/>
<dbReference type="STRING" id="207559.Dde_2244"/>
<dbReference type="KEGG" id="dde:Dde_2244"/>
<dbReference type="eggNOG" id="COG0199">
    <property type="taxonomic scope" value="Bacteria"/>
</dbReference>
<dbReference type="HOGENOM" id="CLU_139869_3_0_7"/>
<dbReference type="Proteomes" id="UP000002710">
    <property type="component" value="Chromosome"/>
</dbReference>
<dbReference type="GO" id="GO:0005737">
    <property type="term" value="C:cytoplasm"/>
    <property type="evidence" value="ECO:0007669"/>
    <property type="project" value="UniProtKB-ARBA"/>
</dbReference>
<dbReference type="GO" id="GO:0015935">
    <property type="term" value="C:small ribosomal subunit"/>
    <property type="evidence" value="ECO:0007669"/>
    <property type="project" value="TreeGrafter"/>
</dbReference>
<dbReference type="GO" id="GO:0019843">
    <property type="term" value="F:rRNA binding"/>
    <property type="evidence" value="ECO:0007669"/>
    <property type="project" value="UniProtKB-UniRule"/>
</dbReference>
<dbReference type="GO" id="GO:0003735">
    <property type="term" value="F:structural constituent of ribosome"/>
    <property type="evidence" value="ECO:0007669"/>
    <property type="project" value="InterPro"/>
</dbReference>
<dbReference type="GO" id="GO:0008270">
    <property type="term" value="F:zinc ion binding"/>
    <property type="evidence" value="ECO:0007669"/>
    <property type="project" value="UniProtKB-UniRule"/>
</dbReference>
<dbReference type="GO" id="GO:0006412">
    <property type="term" value="P:translation"/>
    <property type="evidence" value="ECO:0007669"/>
    <property type="project" value="UniProtKB-UniRule"/>
</dbReference>
<dbReference type="FunFam" id="4.10.830.10:FF:000001">
    <property type="entry name" value="30S ribosomal protein S14 type Z"/>
    <property type="match status" value="1"/>
</dbReference>
<dbReference type="Gene3D" id="4.10.830.10">
    <property type="entry name" value="30s Ribosomal Protein S14, Chain N"/>
    <property type="match status" value="1"/>
</dbReference>
<dbReference type="HAMAP" id="MF_01364_B">
    <property type="entry name" value="Ribosomal_uS14_2_B"/>
    <property type="match status" value="1"/>
</dbReference>
<dbReference type="InterPro" id="IPR001209">
    <property type="entry name" value="Ribosomal_uS14"/>
</dbReference>
<dbReference type="InterPro" id="IPR023053">
    <property type="entry name" value="Ribosomal_uS14_bact"/>
</dbReference>
<dbReference type="InterPro" id="IPR018271">
    <property type="entry name" value="Ribosomal_uS14_CS"/>
</dbReference>
<dbReference type="InterPro" id="IPR043140">
    <property type="entry name" value="Ribosomal_uS14_sf"/>
</dbReference>
<dbReference type="NCBIfam" id="NF005974">
    <property type="entry name" value="PRK08061.1"/>
    <property type="match status" value="1"/>
</dbReference>
<dbReference type="PANTHER" id="PTHR19836">
    <property type="entry name" value="30S RIBOSOMAL PROTEIN S14"/>
    <property type="match status" value="1"/>
</dbReference>
<dbReference type="PANTHER" id="PTHR19836:SF19">
    <property type="entry name" value="SMALL RIBOSOMAL SUBUNIT PROTEIN US14M"/>
    <property type="match status" value="1"/>
</dbReference>
<dbReference type="Pfam" id="PF00253">
    <property type="entry name" value="Ribosomal_S14"/>
    <property type="match status" value="1"/>
</dbReference>
<dbReference type="SUPFAM" id="SSF57716">
    <property type="entry name" value="Glucocorticoid receptor-like (DNA-binding domain)"/>
    <property type="match status" value="1"/>
</dbReference>
<dbReference type="PROSITE" id="PS00527">
    <property type="entry name" value="RIBOSOMAL_S14"/>
    <property type="match status" value="1"/>
</dbReference>
<sequence length="61" mass="7140">MSRTSLEVKAKRKPKFSARAYNRCPICGRPRGYMRKFGICRICFRNMSLRGELPGVRKSSW</sequence>
<reference key="1">
    <citation type="journal article" date="2011" name="J. Bacteriol.">
        <title>Complete genome sequence and updated annotation of Desulfovibrio alaskensis G20.</title>
        <authorList>
            <person name="Hauser L.J."/>
            <person name="Land M.L."/>
            <person name="Brown S.D."/>
            <person name="Larimer F."/>
            <person name="Keller K.L."/>
            <person name="Rapp-Giles B.J."/>
            <person name="Price M.N."/>
            <person name="Lin M."/>
            <person name="Bruce D.C."/>
            <person name="Detter J.C."/>
            <person name="Tapia R."/>
            <person name="Han C.S."/>
            <person name="Goodwin L.A."/>
            <person name="Cheng J.F."/>
            <person name="Pitluck S."/>
            <person name="Copeland A."/>
            <person name="Lucas S."/>
            <person name="Nolan M."/>
            <person name="Lapidus A.L."/>
            <person name="Palumbo A.V."/>
            <person name="Wall J.D."/>
        </authorList>
    </citation>
    <scope>NUCLEOTIDE SEQUENCE [LARGE SCALE GENOMIC DNA]</scope>
    <source>
        <strain>ATCC BAA-1058 / DSM 17464 / G20</strain>
    </source>
</reference>
<proteinExistence type="inferred from homology"/>
<feature type="chain" id="PRO_0000269098" description="Small ribosomal subunit protein uS14">
    <location>
        <begin position="1"/>
        <end position="61"/>
    </location>
</feature>
<feature type="binding site" evidence="1">
    <location>
        <position position="24"/>
    </location>
    <ligand>
        <name>Zn(2+)</name>
        <dbReference type="ChEBI" id="CHEBI:29105"/>
    </ligand>
</feature>
<feature type="binding site" evidence="1">
    <location>
        <position position="27"/>
    </location>
    <ligand>
        <name>Zn(2+)</name>
        <dbReference type="ChEBI" id="CHEBI:29105"/>
    </ligand>
</feature>
<feature type="binding site" evidence="1">
    <location>
        <position position="40"/>
    </location>
    <ligand>
        <name>Zn(2+)</name>
        <dbReference type="ChEBI" id="CHEBI:29105"/>
    </ligand>
</feature>
<feature type="binding site" evidence="1">
    <location>
        <position position="43"/>
    </location>
    <ligand>
        <name>Zn(2+)</name>
        <dbReference type="ChEBI" id="CHEBI:29105"/>
    </ligand>
</feature>
<keyword id="KW-0479">Metal-binding</keyword>
<keyword id="KW-1185">Reference proteome</keyword>
<keyword id="KW-0687">Ribonucleoprotein</keyword>
<keyword id="KW-0689">Ribosomal protein</keyword>
<keyword id="KW-0694">RNA-binding</keyword>
<keyword id="KW-0699">rRNA-binding</keyword>
<keyword id="KW-0862">Zinc</keyword>
<evidence type="ECO:0000255" key="1">
    <source>
        <dbReference type="HAMAP-Rule" id="MF_01364"/>
    </source>
</evidence>
<evidence type="ECO:0000305" key="2"/>